<comment type="function">
    <text evidence="1">Increases the formation of ribosomal termination complexes and stimulates activities of RF-1 and RF-2. It binds guanine nucleotides and has strong preference for UGA stop codons. It may interact directly with the ribosome. The stimulation of RF-1 and RF-2 is significantly reduced by GTP and GDP, but not by GMP.</text>
</comment>
<comment type="subcellular location">
    <subcellularLocation>
        <location evidence="1">Cytoplasm</location>
    </subcellularLocation>
</comment>
<comment type="similarity">
    <text evidence="1">Belongs to the TRAFAC class translation factor GTPase superfamily. Classic translation factor GTPase family. PrfC subfamily.</text>
</comment>
<comment type="sequence caution" evidence="2">
    <conflict type="erroneous initiation">
        <sequence resource="EMBL-CDS" id="CAE40551"/>
    </conflict>
</comment>
<proteinExistence type="inferred from homology"/>
<dbReference type="EMBL" id="BX640411">
    <property type="protein sequence ID" value="CAE40551.1"/>
    <property type="status" value="ALT_INIT"/>
    <property type="molecule type" value="Genomic_DNA"/>
</dbReference>
<dbReference type="RefSeq" id="NP_879063.1">
    <property type="nucleotide sequence ID" value="NC_002929.2"/>
</dbReference>
<dbReference type="RefSeq" id="WP_003815895.1">
    <property type="nucleotide sequence ID" value="NZ_CP039022.1"/>
</dbReference>
<dbReference type="SMR" id="Q7W0G3"/>
<dbReference type="STRING" id="257313.BP0172"/>
<dbReference type="PaxDb" id="257313-BP0172"/>
<dbReference type="KEGG" id="bpe:BP0172"/>
<dbReference type="PATRIC" id="fig|257313.5.peg.182"/>
<dbReference type="eggNOG" id="COG4108">
    <property type="taxonomic scope" value="Bacteria"/>
</dbReference>
<dbReference type="HOGENOM" id="CLU_002794_2_1_4"/>
<dbReference type="Proteomes" id="UP000002676">
    <property type="component" value="Chromosome"/>
</dbReference>
<dbReference type="GO" id="GO:0005829">
    <property type="term" value="C:cytosol"/>
    <property type="evidence" value="ECO:0007669"/>
    <property type="project" value="TreeGrafter"/>
</dbReference>
<dbReference type="GO" id="GO:0005525">
    <property type="term" value="F:GTP binding"/>
    <property type="evidence" value="ECO:0007669"/>
    <property type="project" value="UniProtKB-UniRule"/>
</dbReference>
<dbReference type="GO" id="GO:0003924">
    <property type="term" value="F:GTPase activity"/>
    <property type="evidence" value="ECO:0007669"/>
    <property type="project" value="InterPro"/>
</dbReference>
<dbReference type="GO" id="GO:0016150">
    <property type="term" value="F:translation release factor activity, codon nonspecific"/>
    <property type="evidence" value="ECO:0007669"/>
    <property type="project" value="TreeGrafter"/>
</dbReference>
<dbReference type="GO" id="GO:0016149">
    <property type="term" value="F:translation release factor activity, codon specific"/>
    <property type="evidence" value="ECO:0007669"/>
    <property type="project" value="UniProtKB-UniRule"/>
</dbReference>
<dbReference type="GO" id="GO:0006449">
    <property type="term" value="P:regulation of translational termination"/>
    <property type="evidence" value="ECO:0007669"/>
    <property type="project" value="UniProtKB-UniRule"/>
</dbReference>
<dbReference type="CDD" id="cd04169">
    <property type="entry name" value="RF3"/>
    <property type="match status" value="1"/>
</dbReference>
<dbReference type="FunFam" id="3.30.70.3280:FF:000001">
    <property type="entry name" value="Peptide chain release factor 3"/>
    <property type="match status" value="1"/>
</dbReference>
<dbReference type="FunFam" id="3.40.50.300:FF:000542">
    <property type="entry name" value="Peptide chain release factor 3"/>
    <property type="match status" value="1"/>
</dbReference>
<dbReference type="Gene3D" id="3.40.50.300">
    <property type="entry name" value="P-loop containing nucleotide triphosphate hydrolases"/>
    <property type="match status" value="2"/>
</dbReference>
<dbReference type="Gene3D" id="3.30.70.3280">
    <property type="entry name" value="Peptide chain release factor 3, domain III"/>
    <property type="match status" value="1"/>
</dbReference>
<dbReference type="HAMAP" id="MF_00072">
    <property type="entry name" value="Rel_fac_3"/>
    <property type="match status" value="1"/>
</dbReference>
<dbReference type="InterPro" id="IPR053905">
    <property type="entry name" value="EF-G-like_DII"/>
</dbReference>
<dbReference type="InterPro" id="IPR035647">
    <property type="entry name" value="EFG_III/V"/>
</dbReference>
<dbReference type="InterPro" id="IPR031157">
    <property type="entry name" value="G_TR_CS"/>
</dbReference>
<dbReference type="InterPro" id="IPR027417">
    <property type="entry name" value="P-loop_NTPase"/>
</dbReference>
<dbReference type="InterPro" id="IPR004548">
    <property type="entry name" value="PrfC"/>
</dbReference>
<dbReference type="InterPro" id="IPR032090">
    <property type="entry name" value="RF3_C"/>
</dbReference>
<dbReference type="InterPro" id="IPR038467">
    <property type="entry name" value="RF3_dom_3_sf"/>
</dbReference>
<dbReference type="InterPro" id="IPR041732">
    <property type="entry name" value="RF3_GTP-bd"/>
</dbReference>
<dbReference type="InterPro" id="IPR005225">
    <property type="entry name" value="Small_GTP-bd"/>
</dbReference>
<dbReference type="InterPro" id="IPR000795">
    <property type="entry name" value="T_Tr_GTP-bd_dom"/>
</dbReference>
<dbReference type="InterPro" id="IPR009000">
    <property type="entry name" value="Transl_B-barrel_sf"/>
</dbReference>
<dbReference type="NCBIfam" id="TIGR00503">
    <property type="entry name" value="prfC"/>
    <property type="match status" value="1"/>
</dbReference>
<dbReference type="NCBIfam" id="NF001964">
    <property type="entry name" value="PRK00741.1"/>
    <property type="match status" value="1"/>
</dbReference>
<dbReference type="NCBIfam" id="TIGR00231">
    <property type="entry name" value="small_GTP"/>
    <property type="match status" value="1"/>
</dbReference>
<dbReference type="PANTHER" id="PTHR43556">
    <property type="entry name" value="PEPTIDE CHAIN RELEASE FACTOR RF3"/>
    <property type="match status" value="1"/>
</dbReference>
<dbReference type="PANTHER" id="PTHR43556:SF2">
    <property type="entry name" value="PEPTIDE CHAIN RELEASE FACTOR RF3"/>
    <property type="match status" value="1"/>
</dbReference>
<dbReference type="Pfam" id="PF22042">
    <property type="entry name" value="EF-G_D2"/>
    <property type="match status" value="1"/>
</dbReference>
<dbReference type="Pfam" id="PF00009">
    <property type="entry name" value="GTP_EFTU"/>
    <property type="match status" value="1"/>
</dbReference>
<dbReference type="Pfam" id="PF16658">
    <property type="entry name" value="RF3_C"/>
    <property type="match status" value="1"/>
</dbReference>
<dbReference type="PRINTS" id="PR00315">
    <property type="entry name" value="ELONGATNFCT"/>
</dbReference>
<dbReference type="SUPFAM" id="SSF54980">
    <property type="entry name" value="EF-G C-terminal domain-like"/>
    <property type="match status" value="1"/>
</dbReference>
<dbReference type="SUPFAM" id="SSF52540">
    <property type="entry name" value="P-loop containing nucleoside triphosphate hydrolases"/>
    <property type="match status" value="1"/>
</dbReference>
<dbReference type="SUPFAM" id="SSF50447">
    <property type="entry name" value="Translation proteins"/>
    <property type="match status" value="1"/>
</dbReference>
<dbReference type="PROSITE" id="PS00301">
    <property type="entry name" value="G_TR_1"/>
    <property type="match status" value="1"/>
</dbReference>
<dbReference type="PROSITE" id="PS51722">
    <property type="entry name" value="G_TR_2"/>
    <property type="match status" value="1"/>
</dbReference>
<keyword id="KW-0963">Cytoplasm</keyword>
<keyword id="KW-0342">GTP-binding</keyword>
<keyword id="KW-0547">Nucleotide-binding</keyword>
<keyword id="KW-0648">Protein biosynthesis</keyword>
<keyword id="KW-1185">Reference proteome</keyword>
<evidence type="ECO:0000255" key="1">
    <source>
        <dbReference type="HAMAP-Rule" id="MF_00072"/>
    </source>
</evidence>
<evidence type="ECO:0000305" key="2"/>
<gene>
    <name evidence="1" type="primary">prfC</name>
    <name type="ordered locus">BP0172</name>
</gene>
<protein>
    <recommendedName>
        <fullName evidence="1">Peptide chain release factor 3</fullName>
        <shortName evidence="1">RF-3</shortName>
    </recommendedName>
</protein>
<reference key="1">
    <citation type="journal article" date="2003" name="Nat. Genet.">
        <title>Comparative analysis of the genome sequences of Bordetella pertussis, Bordetella parapertussis and Bordetella bronchiseptica.</title>
        <authorList>
            <person name="Parkhill J."/>
            <person name="Sebaihia M."/>
            <person name="Preston A."/>
            <person name="Murphy L.D."/>
            <person name="Thomson N.R."/>
            <person name="Harris D.E."/>
            <person name="Holden M.T.G."/>
            <person name="Churcher C.M."/>
            <person name="Bentley S.D."/>
            <person name="Mungall K.L."/>
            <person name="Cerdeno-Tarraga A.-M."/>
            <person name="Temple L."/>
            <person name="James K.D."/>
            <person name="Harris B."/>
            <person name="Quail M.A."/>
            <person name="Achtman M."/>
            <person name="Atkin R."/>
            <person name="Baker S."/>
            <person name="Basham D."/>
            <person name="Bason N."/>
            <person name="Cherevach I."/>
            <person name="Chillingworth T."/>
            <person name="Collins M."/>
            <person name="Cronin A."/>
            <person name="Davis P."/>
            <person name="Doggett J."/>
            <person name="Feltwell T."/>
            <person name="Goble A."/>
            <person name="Hamlin N."/>
            <person name="Hauser H."/>
            <person name="Holroyd S."/>
            <person name="Jagels K."/>
            <person name="Leather S."/>
            <person name="Moule S."/>
            <person name="Norberczak H."/>
            <person name="O'Neil S."/>
            <person name="Ormond D."/>
            <person name="Price C."/>
            <person name="Rabbinowitsch E."/>
            <person name="Rutter S."/>
            <person name="Sanders M."/>
            <person name="Saunders D."/>
            <person name="Seeger K."/>
            <person name="Sharp S."/>
            <person name="Simmonds M."/>
            <person name="Skelton J."/>
            <person name="Squares R."/>
            <person name="Squares S."/>
            <person name="Stevens K."/>
            <person name="Unwin L."/>
            <person name="Whitehead S."/>
            <person name="Barrell B.G."/>
            <person name="Maskell D.J."/>
        </authorList>
    </citation>
    <scope>NUCLEOTIDE SEQUENCE [LARGE SCALE GENOMIC DNA]</scope>
    <source>
        <strain>Tohama I / ATCC BAA-589 / NCTC 13251</strain>
    </source>
</reference>
<sequence length="535" mass="59264">MNIPQEVARRRTFAIISHPDAGKTTLTEKLLLFAGAIQIAGSVKARKASRHASSDWMEIEKQRGISVASSVMQMEYRDCVINLLDTPGHQDFSEDTYRVLTAVDAALMVIDAANGVEPQTIRLLQVCRARNTPIITFINKLDREVREPLELLSEIEGHLGMDTVPFSWPVGMGKAFGGVFDIRRNRMRIFRAGQERRGEDDEFIDGLDNPEIPRRFGAAFAQASGEIELINEAAPAFDREAFLAGKQTPVFFGSAINNFGVQEVLDALVDQAPAPGPRQALEREVRPDEPKFTGVVFKVQANMDPAHRDRVAFVRVSSGRFERGMRLKVARTGKEMRPNNVVSFLSQRRELLDEAYAGDVIGIPNHGVLQLGDVLTEGESLRFTGLPFFAPELFQAVEVKDPLRTKQLRVGLTQLGEEGAIQVFRPEAAGGALLLGAVGQLQFEVVAHRLKTEYGVDARMMPSRYTSARWITSDDPRALRKFMDANAAHIAYDVVDAAAFLITSPAQLRVAEDLYPNVKFHALREHGGKVFGDKA</sequence>
<name>RF3_BORPE</name>
<organism>
    <name type="scientific">Bordetella pertussis (strain Tohama I / ATCC BAA-589 / NCTC 13251)</name>
    <dbReference type="NCBI Taxonomy" id="257313"/>
    <lineage>
        <taxon>Bacteria</taxon>
        <taxon>Pseudomonadati</taxon>
        <taxon>Pseudomonadota</taxon>
        <taxon>Betaproteobacteria</taxon>
        <taxon>Burkholderiales</taxon>
        <taxon>Alcaligenaceae</taxon>
        <taxon>Bordetella</taxon>
    </lineage>
</organism>
<accession>Q7W0G3</accession>
<feature type="chain" id="PRO_0000210932" description="Peptide chain release factor 3">
    <location>
        <begin position="1"/>
        <end position="535"/>
    </location>
</feature>
<feature type="domain" description="tr-type G">
    <location>
        <begin position="8"/>
        <end position="278"/>
    </location>
</feature>
<feature type="binding site" evidence="1">
    <location>
        <begin position="17"/>
        <end position="24"/>
    </location>
    <ligand>
        <name>GTP</name>
        <dbReference type="ChEBI" id="CHEBI:37565"/>
    </ligand>
</feature>
<feature type="binding site" evidence="1">
    <location>
        <begin position="85"/>
        <end position="89"/>
    </location>
    <ligand>
        <name>GTP</name>
        <dbReference type="ChEBI" id="CHEBI:37565"/>
    </ligand>
</feature>
<feature type="binding site" evidence="1">
    <location>
        <begin position="139"/>
        <end position="142"/>
    </location>
    <ligand>
        <name>GTP</name>
        <dbReference type="ChEBI" id="CHEBI:37565"/>
    </ligand>
</feature>